<reference key="1">
    <citation type="journal article" date="2002" name="J. Bacteriol.">
        <title>Whole-genome comparison of Mycobacterium tuberculosis clinical and laboratory strains.</title>
        <authorList>
            <person name="Fleischmann R.D."/>
            <person name="Alland D."/>
            <person name="Eisen J.A."/>
            <person name="Carpenter L."/>
            <person name="White O."/>
            <person name="Peterson J.D."/>
            <person name="DeBoy R.T."/>
            <person name="Dodson R.J."/>
            <person name="Gwinn M.L."/>
            <person name="Haft D.H."/>
            <person name="Hickey E.K."/>
            <person name="Kolonay J.F."/>
            <person name="Nelson W.C."/>
            <person name="Umayam L.A."/>
            <person name="Ermolaeva M.D."/>
            <person name="Salzberg S.L."/>
            <person name="Delcher A."/>
            <person name="Utterback T.R."/>
            <person name="Weidman J.F."/>
            <person name="Khouri H.M."/>
            <person name="Gill J."/>
            <person name="Mikula A."/>
            <person name="Bishai W."/>
            <person name="Jacobs W.R. Jr."/>
            <person name="Venter J.C."/>
            <person name="Fraser C.M."/>
        </authorList>
    </citation>
    <scope>NUCLEOTIDE SEQUENCE [LARGE SCALE GENOMIC DNA]</scope>
    <source>
        <strain>CDC 1551 / Oshkosh</strain>
    </source>
</reference>
<feature type="initiator methionine" description="Removed" evidence="1">
    <location>
        <position position="1"/>
    </location>
</feature>
<feature type="chain" id="PRO_0000427645" description="3'-phosphoadenosine 5'-phosphate phosphatase">
    <location>
        <begin position="2"/>
        <end position="267"/>
    </location>
</feature>
<feature type="binding site" evidence="1">
    <location>
        <position position="73"/>
    </location>
    <ligand>
        <name>Mg(2+)</name>
        <dbReference type="ChEBI" id="CHEBI:18420"/>
        <label>1</label>
    </ligand>
</feature>
<feature type="binding site" evidence="1">
    <location>
        <position position="73"/>
    </location>
    <ligand>
        <name>substrate</name>
    </ligand>
</feature>
<feature type="binding site" evidence="1">
    <location>
        <position position="91"/>
    </location>
    <ligand>
        <name>Mg(2+)</name>
        <dbReference type="ChEBI" id="CHEBI:18420"/>
        <label>1</label>
    </ligand>
</feature>
<feature type="binding site" evidence="1">
    <location>
        <position position="91"/>
    </location>
    <ligand>
        <name>Mg(2+)</name>
        <dbReference type="ChEBI" id="CHEBI:18420"/>
        <label>2</label>
    </ligand>
</feature>
<feature type="binding site" evidence="1">
    <location>
        <begin position="93"/>
        <end position="96"/>
    </location>
    <ligand>
        <name>substrate</name>
    </ligand>
</feature>
<feature type="binding site" evidence="1">
    <location>
        <position position="93"/>
    </location>
    <ligand>
        <name>Mg(2+)</name>
        <dbReference type="ChEBI" id="CHEBI:18420"/>
        <label>1</label>
    </ligand>
</feature>
<feature type="binding site" evidence="1">
    <location>
        <position position="94"/>
    </location>
    <ligand>
        <name>Mg(2+)</name>
        <dbReference type="ChEBI" id="CHEBI:18420"/>
        <label>2</label>
    </ligand>
</feature>
<feature type="binding site" evidence="1">
    <location>
        <position position="212"/>
    </location>
    <ligand>
        <name>Mg(2+)</name>
        <dbReference type="ChEBI" id="CHEBI:18420"/>
        <label>2</label>
    </ligand>
</feature>
<feature type="binding site" evidence="1">
    <location>
        <position position="212"/>
    </location>
    <ligand>
        <name>substrate</name>
    </ligand>
</feature>
<keyword id="KW-0378">Hydrolase</keyword>
<keyword id="KW-0460">Magnesium</keyword>
<keyword id="KW-0479">Metal-binding</keyword>
<keyword id="KW-1185">Reference proteome</keyword>
<accession>P9WKJ0</accession>
<accession>L0TBL8</accession>
<accession>O06244</accession>
<accession>P65163</accession>
<gene>
    <name type="primary">cysQ</name>
    <name type="ordered locus">MT2189</name>
</gene>
<protein>
    <recommendedName>
        <fullName>3'-phosphoadenosine 5'-phosphate phosphatase</fullName>
        <shortName>PAP phosphatase</shortName>
        <ecNumber>3.1.3.7</ecNumber>
    </recommendedName>
    <alternativeName>
        <fullName>3'(2'),5'-bisphosphate nucleotidase</fullName>
    </alternativeName>
    <alternativeName>
        <fullName>3'(2'),5-bisphosphonucleoside 3'(2')-phosphohydrolase</fullName>
    </alternativeName>
    <alternativeName>
        <fullName>D-fructose-1,6-bisphosphate 1-phosphohydrolase</fullName>
    </alternativeName>
    <alternativeName>
        <fullName>DPNPase</fullName>
    </alternativeName>
    <alternativeName>
        <fullName>Fructose-1,6-bisphosphatase</fullName>
        <shortName>FBPase</shortName>
        <ecNumber>3.1.3.11</ecNumber>
    </alternativeName>
    <alternativeName>
        <fullName>Inositol-1-monophosphatase</fullName>
        <shortName>I-1-Pase</shortName>
        <shortName>IMPase</shortName>
        <ecNumber>3.1.3.25</ecNumber>
    </alternativeName>
    <alternativeName>
        <fullName>Inositol-1-phosphatase</fullName>
    </alternativeName>
</protein>
<sequence length="267" mass="28447">MVSPAAPDLTDDLTDAELAADLAADAGKLLLQVRAEIGFDQPWTLGEAGDRQANSLLLRRLQAERPGDAVLSEEAHDDLARLKSDRVWIIDPLDGTREFSTPGRDDWAVHIALWRRSSNGQPEITDAAVALPARGNVVYRTDTVTSGAAPAGVPGTLRIAVSATRPPAVLHRIRQTLAIQPVSIGSAGAKAMAVIDGYVDAYLHAGGQWEWDSAAPAGVMLAAGMHASRLDGSPLRYNQLDPYLPDLLMCRAEVAPILLGAIADAWR</sequence>
<proteinExistence type="inferred from homology"/>
<evidence type="ECO:0000250" key="1"/>
<evidence type="ECO:0000305" key="2"/>
<name>CYSQ_MYCTO</name>
<organism>
    <name type="scientific">Mycobacterium tuberculosis (strain CDC 1551 / Oshkosh)</name>
    <dbReference type="NCBI Taxonomy" id="83331"/>
    <lineage>
        <taxon>Bacteria</taxon>
        <taxon>Bacillati</taxon>
        <taxon>Actinomycetota</taxon>
        <taxon>Actinomycetes</taxon>
        <taxon>Mycobacteriales</taxon>
        <taxon>Mycobacteriaceae</taxon>
        <taxon>Mycobacterium</taxon>
        <taxon>Mycobacterium tuberculosis complex</taxon>
    </lineage>
</organism>
<comment type="function">
    <text evidence="1">Phosphatase with a broad specificity. Its primary physiological function is to dephosphorylate 3'-phosphoadenosine 5'-phosphate (PAP) and 3'-phosphoadenosine 5'-phosphosulfate (PAPS). Thus, plays a role in mycobacterial sulfur metabolism, since it can serve as a key regulator of the sulfate assimilation pathway by controlling the pools of PAP and PAPS in the cell. To a lesser extent, is also able to hydrolyze inositol 1-phosphate (I-1-P), fructose 1,6-bisphosphate (FBP) (to fructose 6-phosphate (F-6-P)) and AMP in vitro, but this might not be significant in vivo (By similarity).</text>
</comment>
<comment type="catalytic activity">
    <reaction>
        <text>adenosine 3',5'-bisphosphate + H2O = AMP + phosphate</text>
        <dbReference type="Rhea" id="RHEA:10040"/>
        <dbReference type="ChEBI" id="CHEBI:15377"/>
        <dbReference type="ChEBI" id="CHEBI:43474"/>
        <dbReference type="ChEBI" id="CHEBI:58343"/>
        <dbReference type="ChEBI" id="CHEBI:456215"/>
        <dbReference type="EC" id="3.1.3.7"/>
    </reaction>
</comment>
<comment type="catalytic activity">
    <reaction>
        <text>beta-D-fructose 1,6-bisphosphate + H2O = beta-D-fructose 6-phosphate + phosphate</text>
        <dbReference type="Rhea" id="RHEA:11064"/>
        <dbReference type="ChEBI" id="CHEBI:15377"/>
        <dbReference type="ChEBI" id="CHEBI:32966"/>
        <dbReference type="ChEBI" id="CHEBI:43474"/>
        <dbReference type="ChEBI" id="CHEBI:57634"/>
        <dbReference type="EC" id="3.1.3.11"/>
    </reaction>
</comment>
<comment type="catalytic activity">
    <reaction>
        <text>a myo-inositol phosphate + H2O = myo-inositol + phosphate</text>
        <dbReference type="Rhea" id="RHEA:24056"/>
        <dbReference type="ChEBI" id="CHEBI:15377"/>
        <dbReference type="ChEBI" id="CHEBI:17268"/>
        <dbReference type="ChEBI" id="CHEBI:43474"/>
        <dbReference type="ChEBI" id="CHEBI:84139"/>
        <dbReference type="EC" id="3.1.3.25"/>
    </reaction>
</comment>
<comment type="cofactor">
    <cofactor evidence="1">
        <name>Mg(2+)</name>
        <dbReference type="ChEBI" id="CHEBI:18420"/>
    </cofactor>
</comment>
<comment type="pathway">
    <text>Sulfur metabolism; sulfate assimilation.</text>
</comment>
<comment type="subunit">
    <text evidence="1">Homodimer.</text>
</comment>
<comment type="similarity">
    <text evidence="2">Belongs to the inositol monophosphatase superfamily.</text>
</comment>
<comment type="sequence caution" evidence="2">
    <conflict type="erroneous initiation">
        <sequence resource="EMBL-CDS" id="AAK46473"/>
    </conflict>
    <text>Truncated N-terminus.</text>
</comment>
<dbReference type="EC" id="3.1.3.7"/>
<dbReference type="EC" id="3.1.3.11"/>
<dbReference type="EC" id="3.1.3.25"/>
<dbReference type="EMBL" id="AE000516">
    <property type="protein sequence ID" value="AAK46473.1"/>
    <property type="status" value="ALT_INIT"/>
    <property type="molecule type" value="Genomic_DNA"/>
</dbReference>
<dbReference type="PIR" id="G70576">
    <property type="entry name" value="G70576"/>
</dbReference>
<dbReference type="RefSeq" id="WP_003411096.1">
    <property type="nucleotide sequence ID" value="NZ_KK341227.1"/>
</dbReference>
<dbReference type="SMR" id="P9WKJ0"/>
<dbReference type="GeneID" id="45426106"/>
<dbReference type="KEGG" id="mtc:MT2189"/>
<dbReference type="PATRIC" id="fig|83331.31.peg.2361"/>
<dbReference type="HOGENOM" id="CLU_071517_0_0_11"/>
<dbReference type="UniPathway" id="UPA00097"/>
<dbReference type="Proteomes" id="UP000001020">
    <property type="component" value="Chromosome"/>
</dbReference>
<dbReference type="GO" id="GO:0008441">
    <property type="term" value="F:3'(2'),5'-bisphosphate nucleotidase activity"/>
    <property type="evidence" value="ECO:0007669"/>
    <property type="project" value="UniProtKB-EC"/>
</dbReference>
<dbReference type="GO" id="GO:0042132">
    <property type="term" value="F:fructose 1,6-bisphosphate 1-phosphatase activity"/>
    <property type="evidence" value="ECO:0007669"/>
    <property type="project" value="UniProtKB-EC"/>
</dbReference>
<dbReference type="GO" id="GO:0052834">
    <property type="term" value="F:inositol monophosphate phosphatase activity"/>
    <property type="evidence" value="ECO:0007669"/>
    <property type="project" value="UniProtKB-EC"/>
</dbReference>
<dbReference type="GO" id="GO:0046872">
    <property type="term" value="F:metal ion binding"/>
    <property type="evidence" value="ECO:0007669"/>
    <property type="project" value="UniProtKB-KW"/>
</dbReference>
<dbReference type="GO" id="GO:0050427">
    <property type="term" value="P:3'-phosphoadenosine 5'-phosphosulfate metabolic process"/>
    <property type="evidence" value="ECO:0007669"/>
    <property type="project" value="TreeGrafter"/>
</dbReference>
<dbReference type="GO" id="GO:0000103">
    <property type="term" value="P:sulfate assimilation"/>
    <property type="evidence" value="ECO:0007669"/>
    <property type="project" value="UniProtKB-UniPathway"/>
</dbReference>
<dbReference type="CDD" id="cd01638">
    <property type="entry name" value="CysQ"/>
    <property type="match status" value="1"/>
</dbReference>
<dbReference type="FunFam" id="3.30.540.10:FF:000029">
    <property type="entry name" value="3'-phosphoadenosine 5'-phosphate phosphatase"/>
    <property type="match status" value="1"/>
</dbReference>
<dbReference type="FunFam" id="3.40.190.80:FF:000026">
    <property type="entry name" value="3'-phosphoadenosine 5'-phosphate phosphatase"/>
    <property type="match status" value="1"/>
</dbReference>
<dbReference type="Gene3D" id="3.40.190.80">
    <property type="match status" value="1"/>
</dbReference>
<dbReference type="Gene3D" id="3.30.540.10">
    <property type="entry name" value="Fructose-1,6-Bisphosphatase, subunit A, domain 1"/>
    <property type="match status" value="1"/>
</dbReference>
<dbReference type="InterPro" id="IPR050725">
    <property type="entry name" value="CysQ/Inositol_MonoPase"/>
</dbReference>
<dbReference type="InterPro" id="IPR020583">
    <property type="entry name" value="Inositol_monoP_metal-BS"/>
</dbReference>
<dbReference type="InterPro" id="IPR000760">
    <property type="entry name" value="Inositol_monophosphatase-like"/>
</dbReference>
<dbReference type="PANTHER" id="PTHR43028">
    <property type="entry name" value="3'(2'),5'-BISPHOSPHATE NUCLEOTIDASE 1"/>
    <property type="match status" value="1"/>
</dbReference>
<dbReference type="PANTHER" id="PTHR43028:SF5">
    <property type="entry name" value="3'(2'),5'-BISPHOSPHATE NUCLEOTIDASE 1"/>
    <property type="match status" value="1"/>
</dbReference>
<dbReference type="Pfam" id="PF00459">
    <property type="entry name" value="Inositol_P"/>
    <property type="match status" value="1"/>
</dbReference>
<dbReference type="SUPFAM" id="SSF56655">
    <property type="entry name" value="Carbohydrate phosphatase"/>
    <property type="match status" value="1"/>
</dbReference>
<dbReference type="PROSITE" id="PS00629">
    <property type="entry name" value="IMP_1"/>
    <property type="match status" value="1"/>
</dbReference>